<evidence type="ECO:0000250" key="1">
    <source>
        <dbReference type="UniProtKB" id="O95166"/>
    </source>
</evidence>
<evidence type="ECO:0000250" key="2">
    <source>
        <dbReference type="UniProtKB" id="P60517"/>
    </source>
</evidence>
<evidence type="ECO:0000269" key="3">
    <source>
    </source>
</evidence>
<evidence type="ECO:0000269" key="4">
    <source>
    </source>
</evidence>
<evidence type="ECO:0000269" key="5">
    <source>
    </source>
</evidence>
<evidence type="ECO:0000269" key="6">
    <source>
    </source>
</evidence>
<evidence type="ECO:0000269" key="7">
    <source>
    </source>
</evidence>
<evidence type="ECO:0000269" key="8">
    <source>
    </source>
</evidence>
<evidence type="ECO:0000269" key="9">
    <source>
    </source>
</evidence>
<evidence type="ECO:0000269" key="10">
    <source>
    </source>
</evidence>
<evidence type="ECO:0000305" key="11"/>
<evidence type="ECO:0000312" key="12">
    <source>
        <dbReference type="MGI" id="MGI:1861742"/>
    </source>
</evidence>
<evidence type="ECO:0007744" key="13">
    <source>
        <dbReference type="PDB" id="7FB5"/>
    </source>
</evidence>
<evidence type="ECO:0007829" key="14">
    <source>
        <dbReference type="PDB" id="6A9X"/>
    </source>
</evidence>
<name>GBRAP_MOUSE</name>
<comment type="function">
    <text evidence="1">Ubiquitin-like modifier that plays a role in intracellular transport of GABA(A) receptors and its interaction with the cytoskeleton. Involved in autophagy: while LC3s are involved in elongation of the phagophore membrane, the GABARAP/GATE-16 subfamily is essential for a later stage in autophagosome maturation. Through its interaction with the reticulophagy receptor TEX264, participates in the remodeling of subdomains of the endoplasmic reticulum into autophagosomes upon nutrient stress, which then fuse with lysosomes for endoplasmic reticulum turnover. Also required for the local activation of the CUL3(KBTBD6/7) E3 ubiquitin ligase complex, regulating ubiquitination and degradation of TIAM1, a guanyl-nucleotide exchange factor (GEF) that activates RAC1 and downstream signal transduction. Thereby, regulates different biological processes including the organization of the cytoskeleton, cell migration and proliferation. Involved in apoptosis.</text>
</comment>
<comment type="subunit">
    <text evidence="1 2 3 4 5 7 9">Interacts with GPHN (PubMed:10900017). Interacts with NSF (By similarity). Interacts with ATG7 (PubMed:11890701). Interacts with ATG3 and ATG13 (By similarity). Interacts with alpha-tubulin (By similarity). Interacts with beta-tubulin (PubMed:10899939). Interacts with GABRG2 (By similarity). Interacts with RB1CC1 (By similarity). Interacts with ULK1 (By similarity). Interacts with CALR (By similarity). Interacts with DDX47 (By similarity). Interacts with TP53INP1 and TP53INP2 (By similarity). Interacts with TBC1D5 (By similarity). Interacts with TBC1D25 (PubMed:21383079). Directly interacts with SQSTM1 (By similarity). Interacts with MAPK15 (By similarity). Interacts with TECPR2 (By similarity). Interacts with PCM1 (By similarity). Interacts with TRIM5 and TRIM21 (By similarity). Interacts with MEFV (By similarity). Interacts with KIF21B (By similarity). Interacts with WDFY3; this interaction is required for WDFY3 recruitment to MAP1LC3B-positive p62/SQSTM1 bodies (By similarity). Interacts with FLCN; interaction regulates autophagy (By similarity). Interacts with UBA5 (By similarity). Interacts with KBTBD6 and KBTBD7; the interaction is direct and required for the ubiquitination of TIAM1 (By similarity). Interacts with reticulophagy regulators RETREG1, RETREG2 and RETREG3 (By similarity). Interacts with Irgm1 (By similarity). Interacts with STX17 (By similarity). Interacts with CT55; this interaction may be important for GABARAP protein stability (By similarity). Interacts with DNM2 (By similarity). Interacts with NCOA4 (via C-terminus) (PubMed:26776506).</text>
</comment>
<comment type="subcellular location">
    <subcellularLocation>
        <location evidence="6">Cytoplasmic vesicle</location>
        <location evidence="6">Autophagosome membrane</location>
    </subcellularLocation>
    <subcellularLocation>
        <location evidence="2">Endomembrane system</location>
    </subcellularLocation>
    <subcellularLocation>
        <location evidence="3">Cytoplasm</location>
        <location evidence="3">Cytoskeleton</location>
    </subcellularLocation>
    <subcellularLocation>
        <location evidence="2">Golgi apparatus membrane</location>
    </subcellularLocation>
    <subcellularLocation>
        <location evidence="2">Cytoplasmic vesicle</location>
    </subcellularLocation>
    <text evidence="3 6 8">Largely associated with intracellular membrane structures including the Golgi apparatus and postsynaptic cisternae. Colocalizes with microtubules (PubMed:10899939). Also localizes to discrete punctae along the ciliary axoneme (PubMed:24089209).</text>
</comment>
<comment type="PTM">
    <text evidence="1 6 10">The precursor molecule is cleaved by ATG4 (ATG4A, ATG4B, ATG4C or ATG4D) to expose the glycine at the C-terminus and form the cytosolic form, GABARAP-I (PubMed:14530254). The processed form is then activated by APG7L/ATG7, transferred to ATG3 and conjugated to phosphatidylethanolamine (PE) phospholipid to form the membrane-bound form, GABARAP-II (By similarity). During non-canonical autophagy, the processed form is conjugated to phosphatidylserine (PS) phospholipid (By similarity). ATG4 proteins also mediate the delipidation of PE-conjugated forms (PubMed:33795848). In addition, ATG4B and ATG4D mediate delipidation of ATG8 proteins conjugated to PS during non-canonical autophagy (By similarity). ATG4B constitutes the major protein for proteolytic activation (By similarity). ATG4D is the main enzyme for delipidation activity (PubMed:33795848).</text>
</comment>
<comment type="similarity">
    <text evidence="11">Belongs to the ATG8 family.</text>
</comment>
<reference key="1">
    <citation type="journal article" date="2000" name="J. Neurochem.">
        <title>Binding of the GABA(A) receptor-associated protein (GABARAP) to microtubules and microfilaments suggests involvement of the cytoskeleton in GABARAPGABA(A) receptor interaction.</title>
        <authorList>
            <person name="Wang H."/>
            <person name="Olsen R.W."/>
        </authorList>
    </citation>
    <scope>NUCLEOTIDE SEQUENCE [MRNA]</scope>
    <scope>SUBCELLULAR LOCATION</scope>
    <scope>INTERACTION WITH BETA-TUBULIN</scope>
</reference>
<reference key="2">
    <citation type="journal article" date="2005" name="Science">
        <title>The transcriptional landscape of the mammalian genome.</title>
        <authorList>
            <person name="Carninci P."/>
            <person name="Kasukawa T."/>
            <person name="Katayama S."/>
            <person name="Gough J."/>
            <person name="Frith M.C."/>
            <person name="Maeda N."/>
            <person name="Oyama R."/>
            <person name="Ravasi T."/>
            <person name="Lenhard B."/>
            <person name="Wells C."/>
            <person name="Kodzius R."/>
            <person name="Shimokawa K."/>
            <person name="Bajic V.B."/>
            <person name="Brenner S.E."/>
            <person name="Batalov S."/>
            <person name="Forrest A.R."/>
            <person name="Zavolan M."/>
            <person name="Davis M.J."/>
            <person name="Wilming L.G."/>
            <person name="Aidinis V."/>
            <person name="Allen J.E."/>
            <person name="Ambesi-Impiombato A."/>
            <person name="Apweiler R."/>
            <person name="Aturaliya R.N."/>
            <person name="Bailey T.L."/>
            <person name="Bansal M."/>
            <person name="Baxter L."/>
            <person name="Beisel K.W."/>
            <person name="Bersano T."/>
            <person name="Bono H."/>
            <person name="Chalk A.M."/>
            <person name="Chiu K.P."/>
            <person name="Choudhary V."/>
            <person name="Christoffels A."/>
            <person name="Clutterbuck D.R."/>
            <person name="Crowe M.L."/>
            <person name="Dalla E."/>
            <person name="Dalrymple B.P."/>
            <person name="de Bono B."/>
            <person name="Della Gatta G."/>
            <person name="di Bernardo D."/>
            <person name="Down T."/>
            <person name="Engstrom P."/>
            <person name="Fagiolini M."/>
            <person name="Faulkner G."/>
            <person name="Fletcher C.F."/>
            <person name="Fukushima T."/>
            <person name="Furuno M."/>
            <person name="Futaki S."/>
            <person name="Gariboldi M."/>
            <person name="Georgii-Hemming P."/>
            <person name="Gingeras T.R."/>
            <person name="Gojobori T."/>
            <person name="Green R.E."/>
            <person name="Gustincich S."/>
            <person name="Harbers M."/>
            <person name="Hayashi Y."/>
            <person name="Hensch T.K."/>
            <person name="Hirokawa N."/>
            <person name="Hill D."/>
            <person name="Huminiecki L."/>
            <person name="Iacono M."/>
            <person name="Ikeo K."/>
            <person name="Iwama A."/>
            <person name="Ishikawa T."/>
            <person name="Jakt M."/>
            <person name="Kanapin A."/>
            <person name="Katoh M."/>
            <person name="Kawasawa Y."/>
            <person name="Kelso J."/>
            <person name="Kitamura H."/>
            <person name="Kitano H."/>
            <person name="Kollias G."/>
            <person name="Krishnan S.P."/>
            <person name="Kruger A."/>
            <person name="Kummerfeld S.K."/>
            <person name="Kurochkin I.V."/>
            <person name="Lareau L.F."/>
            <person name="Lazarevic D."/>
            <person name="Lipovich L."/>
            <person name="Liu J."/>
            <person name="Liuni S."/>
            <person name="McWilliam S."/>
            <person name="Madan Babu M."/>
            <person name="Madera M."/>
            <person name="Marchionni L."/>
            <person name="Matsuda H."/>
            <person name="Matsuzawa S."/>
            <person name="Miki H."/>
            <person name="Mignone F."/>
            <person name="Miyake S."/>
            <person name="Morris K."/>
            <person name="Mottagui-Tabar S."/>
            <person name="Mulder N."/>
            <person name="Nakano N."/>
            <person name="Nakauchi H."/>
            <person name="Ng P."/>
            <person name="Nilsson R."/>
            <person name="Nishiguchi S."/>
            <person name="Nishikawa S."/>
            <person name="Nori F."/>
            <person name="Ohara O."/>
            <person name="Okazaki Y."/>
            <person name="Orlando V."/>
            <person name="Pang K.C."/>
            <person name="Pavan W.J."/>
            <person name="Pavesi G."/>
            <person name="Pesole G."/>
            <person name="Petrovsky N."/>
            <person name="Piazza S."/>
            <person name="Reed J."/>
            <person name="Reid J.F."/>
            <person name="Ring B.Z."/>
            <person name="Ringwald M."/>
            <person name="Rost B."/>
            <person name="Ruan Y."/>
            <person name="Salzberg S.L."/>
            <person name="Sandelin A."/>
            <person name="Schneider C."/>
            <person name="Schoenbach C."/>
            <person name="Sekiguchi K."/>
            <person name="Semple C.A."/>
            <person name="Seno S."/>
            <person name="Sessa L."/>
            <person name="Sheng Y."/>
            <person name="Shibata Y."/>
            <person name="Shimada H."/>
            <person name="Shimada K."/>
            <person name="Silva D."/>
            <person name="Sinclair B."/>
            <person name="Sperling S."/>
            <person name="Stupka E."/>
            <person name="Sugiura K."/>
            <person name="Sultana R."/>
            <person name="Takenaka Y."/>
            <person name="Taki K."/>
            <person name="Tammoja K."/>
            <person name="Tan S.L."/>
            <person name="Tang S."/>
            <person name="Taylor M.S."/>
            <person name="Tegner J."/>
            <person name="Teichmann S.A."/>
            <person name="Ueda H.R."/>
            <person name="van Nimwegen E."/>
            <person name="Verardo R."/>
            <person name="Wei C.L."/>
            <person name="Yagi K."/>
            <person name="Yamanishi H."/>
            <person name="Zabarovsky E."/>
            <person name="Zhu S."/>
            <person name="Zimmer A."/>
            <person name="Hide W."/>
            <person name="Bult C."/>
            <person name="Grimmond S.M."/>
            <person name="Teasdale R.D."/>
            <person name="Liu E.T."/>
            <person name="Brusic V."/>
            <person name="Quackenbush J."/>
            <person name="Wahlestedt C."/>
            <person name="Mattick J.S."/>
            <person name="Hume D.A."/>
            <person name="Kai C."/>
            <person name="Sasaki D."/>
            <person name="Tomaru Y."/>
            <person name="Fukuda S."/>
            <person name="Kanamori-Katayama M."/>
            <person name="Suzuki M."/>
            <person name="Aoki J."/>
            <person name="Arakawa T."/>
            <person name="Iida J."/>
            <person name="Imamura K."/>
            <person name="Itoh M."/>
            <person name="Kato T."/>
            <person name="Kawaji H."/>
            <person name="Kawagashira N."/>
            <person name="Kawashima T."/>
            <person name="Kojima M."/>
            <person name="Kondo S."/>
            <person name="Konno H."/>
            <person name="Nakano K."/>
            <person name="Ninomiya N."/>
            <person name="Nishio T."/>
            <person name="Okada M."/>
            <person name="Plessy C."/>
            <person name="Shibata K."/>
            <person name="Shiraki T."/>
            <person name="Suzuki S."/>
            <person name="Tagami M."/>
            <person name="Waki K."/>
            <person name="Watahiki A."/>
            <person name="Okamura-Oho Y."/>
            <person name="Suzuki H."/>
            <person name="Kawai J."/>
            <person name="Hayashizaki Y."/>
        </authorList>
    </citation>
    <scope>NUCLEOTIDE SEQUENCE [LARGE SCALE MRNA]</scope>
    <source>
        <strain>C57BL/6J</strain>
        <tissue>Embryo</tissue>
        <tissue>Kidney</tissue>
    </source>
</reference>
<reference key="3">
    <citation type="journal article" date="2009" name="PLoS Biol.">
        <title>Lineage-specific biology revealed by a finished genome assembly of the mouse.</title>
        <authorList>
            <person name="Church D.M."/>
            <person name="Goodstadt L."/>
            <person name="Hillier L.W."/>
            <person name="Zody M.C."/>
            <person name="Goldstein S."/>
            <person name="She X."/>
            <person name="Bult C.J."/>
            <person name="Agarwala R."/>
            <person name="Cherry J.L."/>
            <person name="DiCuccio M."/>
            <person name="Hlavina W."/>
            <person name="Kapustin Y."/>
            <person name="Meric P."/>
            <person name="Maglott D."/>
            <person name="Birtle Z."/>
            <person name="Marques A.C."/>
            <person name="Graves T."/>
            <person name="Zhou S."/>
            <person name="Teague B."/>
            <person name="Potamousis K."/>
            <person name="Churas C."/>
            <person name="Place M."/>
            <person name="Herschleb J."/>
            <person name="Runnheim R."/>
            <person name="Forrest D."/>
            <person name="Amos-Landgraf J."/>
            <person name="Schwartz D.C."/>
            <person name="Cheng Z."/>
            <person name="Lindblad-Toh K."/>
            <person name="Eichler E.E."/>
            <person name="Ponting C.P."/>
        </authorList>
    </citation>
    <scope>NUCLEOTIDE SEQUENCE [LARGE SCALE GENOMIC DNA]</scope>
    <source>
        <strain>C57BL/6J</strain>
    </source>
</reference>
<reference key="4">
    <citation type="journal article" date="2004" name="Genome Res.">
        <title>The status, quality, and expansion of the NIH full-length cDNA project: the Mammalian Gene Collection (MGC).</title>
        <authorList>
            <consortium name="The MGC Project Team"/>
        </authorList>
    </citation>
    <scope>NUCLEOTIDE SEQUENCE [LARGE SCALE MRNA]</scope>
    <source>
        <tissue>Liver</tissue>
        <tissue>Mammary tumor</tissue>
    </source>
</reference>
<reference key="5">
    <citation type="journal article" date="2002" name="Biochem. Biophys. Res. Commun.">
        <title>Murine Apg12p has a substrate preference for murine Apg7p over three Apg8p homologs.</title>
        <authorList>
            <person name="Tanida I."/>
            <person name="Tanida-Miyake E."/>
            <person name="Nishitani T."/>
            <person name="Komatsu M."/>
            <person name="Yamazaki H."/>
            <person name="Ueno T."/>
            <person name="Kominami E."/>
        </authorList>
    </citation>
    <scope>INTERACTION WITH ATG7</scope>
</reference>
<reference key="6">
    <citation type="journal article" date="2003" name="J. Biol. Chem.">
        <title>A single protease, Apg4B, is specific for the autophagy-related ubiquitin-like proteins GATE-16, MAP1-LC3, GABARAP, and Apg8L.</title>
        <authorList>
            <person name="Hemelaar J."/>
            <person name="Lelyveld V.S."/>
            <person name="Kessler B.M."/>
            <person name="Ploegh H.L."/>
        </authorList>
    </citation>
    <scope>CLEAVAGE BY ATG4B</scope>
    <scope>SUBCELLULAR LOCATION</scope>
</reference>
<reference key="7">
    <citation type="journal article" date="2000" name="Proc. Natl. Acad. Sci. U.S.A.">
        <title>The gamma-aminobutyric acid type A receptor (GABAAR)-associated protein GABARAP interacts with gephyrin but is not involved in receptor anchoring at the synapse.</title>
        <authorList>
            <person name="Kneussel M."/>
            <person name="Haverkamp S."/>
            <person name="Fuhrmann J.C."/>
            <person name="Wang H."/>
            <person name="Waessle H."/>
            <person name="Olsen R.W."/>
            <person name="Betz H."/>
        </authorList>
    </citation>
    <scope>INTERACTION WITH GPHN</scope>
</reference>
<reference key="8">
    <citation type="journal article" date="2010" name="Cell">
        <title>A tissue-specific atlas of mouse protein phosphorylation and expression.</title>
        <authorList>
            <person name="Huttlin E.L."/>
            <person name="Jedrychowski M.P."/>
            <person name="Elias J.E."/>
            <person name="Goswami T."/>
            <person name="Rad R."/>
            <person name="Beausoleil S.A."/>
            <person name="Villen J."/>
            <person name="Haas W."/>
            <person name="Sowa M.E."/>
            <person name="Gygi S.P."/>
        </authorList>
    </citation>
    <scope>IDENTIFICATION BY MASS SPECTROMETRY [LARGE SCALE ANALYSIS]</scope>
    <source>
        <tissue>Pancreas</tissue>
        <tissue>Testis</tissue>
    </source>
</reference>
<reference key="9">
    <citation type="journal article" date="2011" name="J. Cell Biol.">
        <title>OATL1, a novel autophagosome-resident Rab33B-GAP, regulates autophagosomal maturation.</title>
        <authorList>
            <person name="Itoh T."/>
            <person name="Kanno E."/>
            <person name="Uemura T."/>
            <person name="Waguri S."/>
            <person name="Fukuda M."/>
        </authorList>
    </citation>
    <scope>INTERACTION WITH TBC1D25</scope>
</reference>
<reference key="10">
    <citation type="journal article" date="2013" name="Nature">
        <title>Functional interaction between autophagy and ciliogenesis.</title>
        <authorList>
            <person name="Pampliega O."/>
            <person name="Orhon I."/>
            <person name="Patel B."/>
            <person name="Sridhar S."/>
            <person name="Diaz-Carretero A."/>
            <person name="Beau I."/>
            <person name="Codogno P."/>
            <person name="Satir B.H."/>
            <person name="Satir P."/>
            <person name="Cuervo A.M."/>
        </authorList>
    </citation>
    <scope>SUBCELLULAR LOCATION</scope>
</reference>
<reference key="11">
    <citation type="journal article" date="2021" name="Cell Death Differ.">
        <title>ATG4D is the main ATG8 delipidating enzyme in mammalian cells and protects against cerebellar neurodegeneration.</title>
        <authorList>
            <person name="Tamargo-Gomez I."/>
            <person name="Martinez-Garcia G.G."/>
            <person name="Suarez M.F."/>
            <person name="Rey V."/>
            <person name="Fueyo A."/>
            <person name="Codina-Martinez H."/>
            <person name="Bretones G."/>
            <person name="Caravia X.M."/>
            <person name="Morel E."/>
            <person name="Dupont N."/>
            <person name="Cabo R."/>
            <person name="Tomas-Zapico C."/>
            <person name="Souquere S."/>
            <person name="Pierron G."/>
            <person name="Codogno P."/>
            <person name="Lopez-Otin C."/>
            <person name="Fernandez A.F."/>
            <person name="Marino G."/>
        </authorList>
    </citation>
    <scope>LIPIDATION</scope>
    <scope>DELIPIDATION</scope>
</reference>
<reference key="12">
    <citation type="journal article" date="2016" name="Cell Rep.">
        <title>NCOA4 Deficiency Impairs Systemic Iron Homeostasis.</title>
        <authorList>
            <person name="Bellelli R."/>
            <person name="Federico G."/>
            <person name="Matte' A."/>
            <person name="Colecchia D."/>
            <person name="Iolascon A."/>
            <person name="Chiariello M."/>
            <person name="Santoro M."/>
            <person name="De Franceschi L."/>
            <person name="Carlomagno F."/>
        </authorList>
    </citation>
    <scope>INTERACTION WITH NCOA4</scope>
</reference>
<reference evidence="13" key="13">
    <citation type="journal article" date="2022" name="FEBS Open Bio">
        <title>The crystal structure of the FAM134B-GABARAP complex provides mechanistic insights into the selective binding of FAM134 to the GABARAP subfamily.</title>
        <authorList>
            <person name="Zhao J."/>
            <person name="Li Z."/>
            <person name="Li J."/>
        </authorList>
    </citation>
    <scope>X-RAY CRYSTALLOGRAPHY (2.84 ANGSTROMS) IN COMPLEX WITH HUMAN RETREG1</scope>
</reference>
<protein>
    <recommendedName>
        <fullName evidence="11">Gamma-aminobutyric acid receptor-associated protein</fullName>
    </recommendedName>
    <alternativeName>
        <fullName>GABA(A) receptor-associated protein</fullName>
    </alternativeName>
</protein>
<accession>Q9DCD6</accession>
<accession>B1AR49</accession>
<accession>Q9QUI7</accession>
<feature type="chain" id="PRO_0000212364" description="Gamma-aminobutyric acid receptor-associated protein">
    <location>
        <begin position="1"/>
        <end position="116"/>
    </location>
</feature>
<feature type="propeptide" id="PRO_0000423066" description="Removed in mature form" evidence="6">
    <location>
        <position position="117"/>
    </location>
</feature>
<feature type="region of interest" description="Interaction with beta-tubulin" evidence="3">
    <location>
        <begin position="1"/>
        <end position="22"/>
    </location>
</feature>
<feature type="region of interest" description="Interaction with GPHN" evidence="4">
    <location>
        <begin position="36"/>
        <end position="117"/>
    </location>
</feature>
<feature type="region of interest" description="Interaction with GABRG2" evidence="1">
    <location>
        <begin position="36"/>
        <end position="68"/>
    </location>
</feature>
<feature type="region of interest" description="Interaction with LIR (LC3 nteracting Region) motif of ATG3" evidence="1">
    <location>
        <begin position="48"/>
        <end position="50"/>
    </location>
</feature>
<feature type="site" description="Interaction with LIR (LC3 nteracting Region) motif of ATG3" evidence="1">
    <location>
        <position position="17"/>
    </location>
</feature>
<feature type="site" description="Interaction with LIR (LC3 nteracting Region) motif of ATG3" evidence="1">
    <location>
        <position position="28"/>
    </location>
</feature>
<feature type="site" description="Cleavage; by ATG4B" evidence="6">
    <location>
        <begin position="116"/>
        <end position="117"/>
    </location>
</feature>
<feature type="lipid moiety-binding region" description="Phosphatidylethanolamine amidated glycine; alternate" evidence="1">
    <location>
        <position position="116"/>
    </location>
</feature>
<feature type="lipid moiety-binding region" description="Phosphatidylserine amidated glycine; alternate" evidence="1">
    <location>
        <position position="116"/>
    </location>
</feature>
<feature type="sequence conflict" description="In Ref. 2; BAB22426." evidence="11" ref="2">
    <original>E</original>
    <variation>D</variation>
    <location>
        <position position="12"/>
    </location>
</feature>
<feature type="helix" evidence="14">
    <location>
        <begin position="4"/>
        <end position="8"/>
    </location>
</feature>
<feature type="helix" evidence="14">
    <location>
        <begin position="11"/>
        <end position="24"/>
    </location>
</feature>
<feature type="strand" evidence="14">
    <location>
        <begin position="28"/>
        <end position="35"/>
    </location>
</feature>
<feature type="strand" evidence="14">
    <location>
        <begin position="47"/>
        <end position="52"/>
    </location>
</feature>
<feature type="helix" evidence="14">
    <location>
        <begin position="57"/>
        <end position="68"/>
    </location>
</feature>
<feature type="strand" evidence="14">
    <location>
        <begin position="77"/>
        <end position="83"/>
    </location>
</feature>
<feature type="helix" evidence="14">
    <location>
        <begin position="91"/>
        <end position="98"/>
    </location>
</feature>
<feature type="strand" evidence="14">
    <location>
        <begin position="105"/>
        <end position="114"/>
    </location>
</feature>
<sequence length="117" mass="13918">MKFVYKEEHPFEKRRSEGEKIRKKYPDRVPVIVEKAPKARIGDLDKKKYLVPSDLTVGQFYFLIRKRIHLRAEDALFFFVNNVIPPTSATMGQLYQEHHEEDFFLYIAYSDESVYGL</sequence>
<gene>
    <name evidence="12" type="primary">Gabarap</name>
</gene>
<organism>
    <name type="scientific">Mus musculus</name>
    <name type="common">Mouse</name>
    <dbReference type="NCBI Taxonomy" id="10090"/>
    <lineage>
        <taxon>Eukaryota</taxon>
        <taxon>Metazoa</taxon>
        <taxon>Chordata</taxon>
        <taxon>Craniata</taxon>
        <taxon>Vertebrata</taxon>
        <taxon>Euteleostomi</taxon>
        <taxon>Mammalia</taxon>
        <taxon>Eutheria</taxon>
        <taxon>Euarchontoglires</taxon>
        <taxon>Glires</taxon>
        <taxon>Rodentia</taxon>
        <taxon>Myomorpha</taxon>
        <taxon>Muroidea</taxon>
        <taxon>Muridae</taxon>
        <taxon>Murinae</taxon>
        <taxon>Mus</taxon>
        <taxon>Mus</taxon>
    </lineage>
</organism>
<proteinExistence type="evidence at protein level"/>
<keyword id="KW-0002">3D-structure</keyword>
<keyword id="KW-0053">Apoptosis</keyword>
<keyword id="KW-0072">Autophagy</keyword>
<keyword id="KW-0963">Cytoplasm</keyword>
<keyword id="KW-0968">Cytoplasmic vesicle</keyword>
<keyword id="KW-0206">Cytoskeleton</keyword>
<keyword id="KW-0333">Golgi apparatus</keyword>
<keyword id="KW-0449">Lipoprotein</keyword>
<keyword id="KW-0472">Membrane</keyword>
<keyword id="KW-0493">Microtubule</keyword>
<keyword id="KW-0653">Protein transport</keyword>
<keyword id="KW-1185">Reference proteome</keyword>
<keyword id="KW-0813">Transport</keyword>
<dbReference type="EMBL" id="AF161587">
    <property type="protein sequence ID" value="AAD47642.1"/>
    <property type="molecule type" value="mRNA"/>
</dbReference>
<dbReference type="EMBL" id="AK002879">
    <property type="protein sequence ID" value="BAB22426.1"/>
    <property type="molecule type" value="mRNA"/>
</dbReference>
<dbReference type="EMBL" id="AK011731">
    <property type="protein sequence ID" value="BAB27806.1"/>
    <property type="molecule type" value="mRNA"/>
</dbReference>
<dbReference type="EMBL" id="AL596185">
    <property type="status" value="NOT_ANNOTATED_CDS"/>
    <property type="molecule type" value="Genomic_DNA"/>
</dbReference>
<dbReference type="EMBL" id="BC002126">
    <property type="protein sequence ID" value="AAH02126.1"/>
    <property type="molecule type" value="mRNA"/>
</dbReference>
<dbReference type="EMBL" id="BC024621">
    <property type="protein sequence ID" value="AAH24621.1"/>
    <property type="molecule type" value="mRNA"/>
</dbReference>
<dbReference type="EMBL" id="BC030350">
    <property type="protein sequence ID" value="AAH30350.1"/>
    <property type="molecule type" value="mRNA"/>
</dbReference>
<dbReference type="CCDS" id="CCDS24928.1"/>
<dbReference type="RefSeq" id="NP_062723.1">
    <property type="nucleotide sequence ID" value="NM_019749.4"/>
</dbReference>
<dbReference type="PDB" id="5YIR">
    <property type="method" value="X-ray"/>
    <property type="resolution" value="2.75 A"/>
    <property type="chains" value="A/B/D=1-117"/>
</dbReference>
<dbReference type="PDB" id="6A9X">
    <property type="method" value="X-ray"/>
    <property type="resolution" value="2.20 A"/>
    <property type="chains" value="D=1-117"/>
</dbReference>
<dbReference type="PDB" id="7FB5">
    <property type="method" value="X-ray"/>
    <property type="resolution" value="2.84 A"/>
    <property type="chains" value="A=1-117"/>
</dbReference>
<dbReference type="PDBsum" id="5YIR"/>
<dbReference type="PDBsum" id="6A9X"/>
<dbReference type="PDBsum" id="7FB5"/>
<dbReference type="BMRB" id="Q9DCD6"/>
<dbReference type="SMR" id="Q9DCD6"/>
<dbReference type="BioGRID" id="208012">
    <property type="interactions" value="17"/>
</dbReference>
<dbReference type="ELM" id="Q9DCD6"/>
<dbReference type="FunCoup" id="Q9DCD6">
    <property type="interactions" value="2495"/>
</dbReference>
<dbReference type="IntAct" id="Q9DCD6">
    <property type="interactions" value="2"/>
</dbReference>
<dbReference type="MINT" id="Q9DCD6"/>
<dbReference type="STRING" id="10090.ENSMUSP00000018711"/>
<dbReference type="GlyGen" id="Q9DCD6">
    <property type="glycosylation" value="1 site"/>
</dbReference>
<dbReference type="iPTMnet" id="Q9DCD6"/>
<dbReference type="PhosphoSitePlus" id="Q9DCD6"/>
<dbReference type="jPOST" id="Q9DCD6"/>
<dbReference type="PaxDb" id="10090-ENSMUSP00000018711"/>
<dbReference type="PeptideAtlas" id="Q9DCD6"/>
<dbReference type="ProteomicsDB" id="266780"/>
<dbReference type="Pumba" id="Q9DCD6"/>
<dbReference type="Antibodypedia" id="11841">
    <property type="antibodies" value="686 antibodies from 37 providers"/>
</dbReference>
<dbReference type="DNASU" id="56486"/>
<dbReference type="Ensembl" id="ENSMUST00000018711.15">
    <property type="protein sequence ID" value="ENSMUSP00000018711.9"/>
    <property type="gene ID" value="ENSMUSG00000018567.15"/>
</dbReference>
<dbReference type="GeneID" id="56486"/>
<dbReference type="KEGG" id="mmu:56486"/>
<dbReference type="UCSC" id="uc007jtg.2">
    <property type="organism name" value="mouse"/>
</dbReference>
<dbReference type="AGR" id="MGI:1861742"/>
<dbReference type="CTD" id="11337"/>
<dbReference type="MGI" id="MGI:1861742">
    <property type="gene designation" value="Gabarap"/>
</dbReference>
<dbReference type="VEuPathDB" id="HostDB:ENSMUSG00000018567"/>
<dbReference type="eggNOG" id="KOG1654">
    <property type="taxonomic scope" value="Eukaryota"/>
</dbReference>
<dbReference type="GeneTree" id="ENSGT00940000157496"/>
<dbReference type="HOGENOM" id="CLU_119276_0_0_1"/>
<dbReference type="InParanoid" id="Q9DCD6"/>
<dbReference type="OMA" id="AVYQEHK"/>
<dbReference type="OrthoDB" id="6738456at2759"/>
<dbReference type="PhylomeDB" id="Q9DCD6"/>
<dbReference type="TreeFam" id="TF314556"/>
<dbReference type="Reactome" id="R-MMU-1632852">
    <property type="pathway name" value="Macroautophagy"/>
</dbReference>
<dbReference type="Reactome" id="R-MMU-8854214">
    <property type="pathway name" value="TBC/RABGAPs"/>
</dbReference>
<dbReference type="BioGRID-ORCS" id="56486">
    <property type="hits" value="2 hits in 77 CRISPR screens"/>
</dbReference>
<dbReference type="ChiTaRS" id="Gabarap">
    <property type="organism name" value="mouse"/>
</dbReference>
<dbReference type="PRO" id="PR:Q9DCD6"/>
<dbReference type="Proteomes" id="UP000000589">
    <property type="component" value="Chromosome 11"/>
</dbReference>
<dbReference type="RNAct" id="Q9DCD6">
    <property type="molecule type" value="protein"/>
</dbReference>
<dbReference type="Bgee" id="ENSMUSG00000018567">
    <property type="expression patterns" value="Expressed in molar tooth and 272 other cell types or tissues"/>
</dbReference>
<dbReference type="ExpressionAtlas" id="Q9DCD6">
    <property type="expression patterns" value="baseline and differential"/>
</dbReference>
<dbReference type="GO" id="GO:0015629">
    <property type="term" value="C:actin cytoskeleton"/>
    <property type="evidence" value="ECO:0000314"/>
    <property type="project" value="MGI"/>
</dbReference>
<dbReference type="GO" id="GO:0005776">
    <property type="term" value="C:autophagosome"/>
    <property type="evidence" value="ECO:0000250"/>
    <property type="project" value="UniProtKB"/>
</dbReference>
<dbReference type="GO" id="GO:0000421">
    <property type="term" value="C:autophagosome membrane"/>
    <property type="evidence" value="ECO:0007669"/>
    <property type="project" value="UniProtKB-SubCell"/>
</dbReference>
<dbReference type="GO" id="GO:0005930">
    <property type="term" value="C:axoneme"/>
    <property type="evidence" value="ECO:0000314"/>
    <property type="project" value="UniProtKB"/>
</dbReference>
<dbReference type="GO" id="GO:0031410">
    <property type="term" value="C:cytoplasmic vesicle"/>
    <property type="evidence" value="ECO:0007669"/>
    <property type="project" value="UniProtKB-KW"/>
</dbReference>
<dbReference type="GO" id="GO:0098982">
    <property type="term" value="C:GABA-ergic synapse"/>
    <property type="evidence" value="ECO:0000314"/>
    <property type="project" value="SynGO"/>
</dbReference>
<dbReference type="GO" id="GO:0005794">
    <property type="term" value="C:Golgi apparatus"/>
    <property type="evidence" value="ECO:0000314"/>
    <property type="project" value="MGI"/>
</dbReference>
<dbReference type="GO" id="GO:0000139">
    <property type="term" value="C:Golgi membrane"/>
    <property type="evidence" value="ECO:0007669"/>
    <property type="project" value="UniProtKB-SubCell"/>
</dbReference>
<dbReference type="GO" id="GO:0005764">
    <property type="term" value="C:lysosome"/>
    <property type="evidence" value="ECO:0000314"/>
    <property type="project" value="MGI"/>
</dbReference>
<dbReference type="GO" id="GO:0005874">
    <property type="term" value="C:microtubule"/>
    <property type="evidence" value="ECO:0007669"/>
    <property type="project" value="UniProtKB-KW"/>
</dbReference>
<dbReference type="GO" id="GO:0005875">
    <property type="term" value="C:microtubule associated complex"/>
    <property type="evidence" value="ECO:0000314"/>
    <property type="project" value="MGI"/>
</dbReference>
<dbReference type="GO" id="GO:0005886">
    <property type="term" value="C:plasma membrane"/>
    <property type="evidence" value="ECO:0000314"/>
    <property type="project" value="MGI"/>
</dbReference>
<dbReference type="GO" id="GO:0005790">
    <property type="term" value="C:smooth endoplasmic reticulum"/>
    <property type="evidence" value="ECO:0000314"/>
    <property type="project" value="MGI"/>
</dbReference>
<dbReference type="GO" id="GO:0097225">
    <property type="term" value="C:sperm midpiece"/>
    <property type="evidence" value="ECO:0000314"/>
    <property type="project" value="MGI"/>
</dbReference>
<dbReference type="GO" id="GO:0048487">
    <property type="term" value="F:beta-tubulin binding"/>
    <property type="evidence" value="ECO:0007669"/>
    <property type="project" value="Ensembl"/>
</dbReference>
<dbReference type="GO" id="GO:0050811">
    <property type="term" value="F:GABA receptor binding"/>
    <property type="evidence" value="ECO:0007669"/>
    <property type="project" value="Ensembl"/>
</dbReference>
<dbReference type="GO" id="GO:0008017">
    <property type="term" value="F:microtubule binding"/>
    <property type="evidence" value="ECO:0000314"/>
    <property type="project" value="MGI"/>
</dbReference>
<dbReference type="GO" id="GO:0008429">
    <property type="term" value="F:phosphatidylethanolamine binding"/>
    <property type="evidence" value="ECO:0007669"/>
    <property type="project" value="Ensembl"/>
</dbReference>
<dbReference type="GO" id="GO:0031625">
    <property type="term" value="F:ubiquitin protein ligase binding"/>
    <property type="evidence" value="ECO:0007669"/>
    <property type="project" value="Ensembl"/>
</dbReference>
<dbReference type="GO" id="GO:0006914">
    <property type="term" value="P:autophagy"/>
    <property type="evidence" value="ECO:0007669"/>
    <property type="project" value="UniProtKB-KW"/>
</dbReference>
<dbReference type="GO" id="GO:0008625">
    <property type="term" value="P:extrinsic apoptotic signaling pathway via death domain receptors"/>
    <property type="evidence" value="ECO:0000250"/>
    <property type="project" value="UniProtKB"/>
</dbReference>
<dbReference type="GO" id="GO:0000226">
    <property type="term" value="P:microtubule cytoskeleton organization"/>
    <property type="evidence" value="ECO:0000314"/>
    <property type="project" value="MGI"/>
</dbReference>
<dbReference type="GO" id="GO:0032436">
    <property type="term" value="P:positive regulation of proteasomal ubiquitin-dependent protein catabolic process"/>
    <property type="evidence" value="ECO:0000250"/>
    <property type="project" value="UniProtKB"/>
</dbReference>
<dbReference type="GO" id="GO:1902524">
    <property type="term" value="P:positive regulation of protein K48-linked ubiquitination"/>
    <property type="evidence" value="ECO:0000250"/>
    <property type="project" value="UniProtKB"/>
</dbReference>
<dbReference type="GO" id="GO:0015031">
    <property type="term" value="P:protein transport"/>
    <property type="evidence" value="ECO:0007669"/>
    <property type="project" value="UniProtKB-KW"/>
</dbReference>
<dbReference type="GO" id="GO:0098696">
    <property type="term" value="P:regulation of neurotransmitter receptor localization to postsynaptic specialization membrane"/>
    <property type="evidence" value="ECO:0000314"/>
    <property type="project" value="SynGO"/>
</dbReference>
<dbReference type="GO" id="GO:0035020">
    <property type="term" value="P:regulation of Rac protein signal transduction"/>
    <property type="evidence" value="ECO:0000250"/>
    <property type="project" value="UniProtKB"/>
</dbReference>
<dbReference type="CDD" id="cd17232">
    <property type="entry name" value="Ubl_ATG8_GABARAP"/>
    <property type="match status" value="1"/>
</dbReference>
<dbReference type="FunFam" id="3.10.20.90:FF:000037">
    <property type="entry name" value="Gamma-aminobutyric acid receptor-associated protein-like 1"/>
    <property type="match status" value="1"/>
</dbReference>
<dbReference type="Gene3D" id="3.10.20.90">
    <property type="entry name" value="Phosphatidylinositol 3-kinase Catalytic Subunit, Chain A, domain 1"/>
    <property type="match status" value="1"/>
</dbReference>
<dbReference type="InterPro" id="IPR004241">
    <property type="entry name" value="Atg8-like"/>
</dbReference>
<dbReference type="InterPro" id="IPR029071">
    <property type="entry name" value="Ubiquitin-like_domsf"/>
</dbReference>
<dbReference type="PANTHER" id="PTHR10969">
    <property type="entry name" value="MICROTUBULE-ASSOCIATED PROTEINS 1A/1B LIGHT CHAIN 3-RELATED"/>
    <property type="match status" value="1"/>
</dbReference>
<dbReference type="Pfam" id="PF02991">
    <property type="entry name" value="ATG8"/>
    <property type="match status" value="1"/>
</dbReference>
<dbReference type="SUPFAM" id="SSF54236">
    <property type="entry name" value="Ubiquitin-like"/>
    <property type="match status" value="1"/>
</dbReference>